<evidence type="ECO:0000255" key="1">
    <source>
        <dbReference type="HAMAP-Rule" id="MF_01309"/>
    </source>
</evidence>
<evidence type="ECO:0000305" key="2"/>
<feature type="chain" id="PRO_0000323315" description="Small ribosomal subunit protein uS3">
    <location>
        <begin position="1"/>
        <end position="211"/>
    </location>
</feature>
<feature type="domain" description="KH type-2" evidence="1">
    <location>
        <begin position="16"/>
        <end position="85"/>
    </location>
</feature>
<reference key="1">
    <citation type="submission" date="2007-06" db="EMBL/GenBank/DDBJ databases">
        <title>Complete sequence of Methanococcus vannielii SB.</title>
        <authorList>
            <consortium name="US DOE Joint Genome Institute"/>
            <person name="Copeland A."/>
            <person name="Lucas S."/>
            <person name="Lapidus A."/>
            <person name="Barry K."/>
            <person name="Glavina del Rio T."/>
            <person name="Dalin E."/>
            <person name="Tice H."/>
            <person name="Pitluck S."/>
            <person name="Chain P."/>
            <person name="Malfatti S."/>
            <person name="Shin M."/>
            <person name="Vergez L."/>
            <person name="Schmutz J."/>
            <person name="Larimer F."/>
            <person name="Land M."/>
            <person name="Hauser L."/>
            <person name="Kyrpides N."/>
            <person name="Anderson I."/>
            <person name="Sieprawska-Lupa M."/>
            <person name="Whitman W.B."/>
            <person name="Richardson P."/>
        </authorList>
    </citation>
    <scope>NUCLEOTIDE SEQUENCE [LARGE SCALE GENOMIC DNA]</scope>
    <source>
        <strain>ATCC 35089 / DSM 1224 / JCM 13029 / OCM 148 / SB</strain>
    </source>
</reference>
<name>RS3_METVS</name>
<protein>
    <recommendedName>
        <fullName evidence="1">Small ribosomal subunit protein uS3</fullName>
    </recommendedName>
    <alternativeName>
        <fullName evidence="2">30S ribosomal protein S3</fullName>
    </alternativeName>
</protein>
<keyword id="KW-0687">Ribonucleoprotein</keyword>
<keyword id="KW-0689">Ribosomal protein</keyword>
<keyword id="KW-0694">RNA-binding</keyword>
<keyword id="KW-0699">rRNA-binding</keyword>
<dbReference type="EMBL" id="CP000742">
    <property type="protein sequence ID" value="ABR54621.1"/>
    <property type="molecule type" value="Genomic_DNA"/>
</dbReference>
<dbReference type="RefSeq" id="WP_011972523.1">
    <property type="nucleotide sequence ID" value="NC_009634.1"/>
</dbReference>
<dbReference type="SMR" id="A6UQ49"/>
<dbReference type="STRING" id="406327.Mevan_0715"/>
<dbReference type="GeneID" id="5326206"/>
<dbReference type="KEGG" id="mvn:Mevan_0715"/>
<dbReference type="eggNOG" id="arCOG04097">
    <property type="taxonomic scope" value="Archaea"/>
</dbReference>
<dbReference type="HOGENOM" id="CLU_058591_1_1_2"/>
<dbReference type="OrthoDB" id="9126at2157"/>
<dbReference type="Proteomes" id="UP000001107">
    <property type="component" value="Chromosome"/>
</dbReference>
<dbReference type="GO" id="GO:0022627">
    <property type="term" value="C:cytosolic small ribosomal subunit"/>
    <property type="evidence" value="ECO:0007669"/>
    <property type="project" value="TreeGrafter"/>
</dbReference>
<dbReference type="GO" id="GO:0019843">
    <property type="term" value="F:rRNA binding"/>
    <property type="evidence" value="ECO:0007669"/>
    <property type="project" value="UniProtKB-UniRule"/>
</dbReference>
<dbReference type="GO" id="GO:0003735">
    <property type="term" value="F:structural constituent of ribosome"/>
    <property type="evidence" value="ECO:0007669"/>
    <property type="project" value="InterPro"/>
</dbReference>
<dbReference type="GO" id="GO:0006412">
    <property type="term" value="P:translation"/>
    <property type="evidence" value="ECO:0007669"/>
    <property type="project" value="UniProtKB-UniRule"/>
</dbReference>
<dbReference type="CDD" id="cd02411">
    <property type="entry name" value="KH-II_30S_S3_arch"/>
    <property type="match status" value="1"/>
</dbReference>
<dbReference type="FunFam" id="3.30.300.20:FF:000001">
    <property type="entry name" value="30S ribosomal protein S3"/>
    <property type="match status" value="1"/>
</dbReference>
<dbReference type="Gene3D" id="3.30.300.20">
    <property type="match status" value="1"/>
</dbReference>
<dbReference type="Gene3D" id="3.30.1140.32">
    <property type="entry name" value="Ribosomal protein S3, C-terminal domain"/>
    <property type="match status" value="1"/>
</dbReference>
<dbReference type="HAMAP" id="MF_01309_A">
    <property type="entry name" value="Ribosomal_uS3_A"/>
    <property type="match status" value="1"/>
</dbReference>
<dbReference type="InterPro" id="IPR004087">
    <property type="entry name" value="KH_dom"/>
</dbReference>
<dbReference type="InterPro" id="IPR015946">
    <property type="entry name" value="KH_dom-like_a/b"/>
</dbReference>
<dbReference type="InterPro" id="IPR004044">
    <property type="entry name" value="KH_dom_type_2"/>
</dbReference>
<dbReference type="InterPro" id="IPR009019">
    <property type="entry name" value="KH_sf_prok-type"/>
</dbReference>
<dbReference type="InterPro" id="IPR036419">
    <property type="entry name" value="Ribosomal_S3_C_sf"/>
</dbReference>
<dbReference type="InterPro" id="IPR027488">
    <property type="entry name" value="Ribosomal_uS3_arc"/>
</dbReference>
<dbReference type="InterPro" id="IPR001351">
    <property type="entry name" value="Ribosomal_uS3_C"/>
</dbReference>
<dbReference type="InterPro" id="IPR005703">
    <property type="entry name" value="Ribosomal_uS3_euk/arc"/>
</dbReference>
<dbReference type="NCBIfam" id="NF003219">
    <property type="entry name" value="PRK04191.1"/>
    <property type="match status" value="1"/>
</dbReference>
<dbReference type="NCBIfam" id="TIGR01008">
    <property type="entry name" value="uS3_euk_arch"/>
    <property type="match status" value="1"/>
</dbReference>
<dbReference type="PANTHER" id="PTHR11760">
    <property type="entry name" value="30S/40S RIBOSOMAL PROTEIN S3"/>
    <property type="match status" value="1"/>
</dbReference>
<dbReference type="PANTHER" id="PTHR11760:SF32">
    <property type="entry name" value="SMALL RIBOSOMAL SUBUNIT PROTEIN US3"/>
    <property type="match status" value="1"/>
</dbReference>
<dbReference type="Pfam" id="PF07650">
    <property type="entry name" value="KH_2"/>
    <property type="match status" value="1"/>
</dbReference>
<dbReference type="Pfam" id="PF00189">
    <property type="entry name" value="Ribosomal_S3_C"/>
    <property type="match status" value="1"/>
</dbReference>
<dbReference type="SMART" id="SM00322">
    <property type="entry name" value="KH"/>
    <property type="match status" value="1"/>
</dbReference>
<dbReference type="SUPFAM" id="SSF54814">
    <property type="entry name" value="Prokaryotic type KH domain (KH-domain type II)"/>
    <property type="match status" value="1"/>
</dbReference>
<dbReference type="SUPFAM" id="SSF54821">
    <property type="entry name" value="Ribosomal protein S3 C-terminal domain"/>
    <property type="match status" value="1"/>
</dbReference>
<dbReference type="PROSITE" id="PS50823">
    <property type="entry name" value="KH_TYPE_2"/>
    <property type="match status" value="1"/>
</dbReference>
<accession>A6UQ49</accession>
<organism>
    <name type="scientific">Methanococcus vannielii (strain ATCC 35089 / DSM 1224 / JCM 13029 / OCM 148 / SB)</name>
    <dbReference type="NCBI Taxonomy" id="406327"/>
    <lineage>
        <taxon>Archaea</taxon>
        <taxon>Methanobacteriati</taxon>
        <taxon>Methanobacteriota</taxon>
        <taxon>Methanomada group</taxon>
        <taxon>Methanococci</taxon>
        <taxon>Methanococcales</taxon>
        <taxon>Methanococcaceae</taxon>
        <taxon>Methanococcus</taxon>
    </lineage>
</organism>
<comment type="function">
    <text evidence="1">Binds the lower part of the 30S subunit head.</text>
</comment>
<comment type="subunit">
    <text evidence="1">Part of the 30S ribosomal subunit.</text>
</comment>
<comment type="similarity">
    <text evidence="1">Belongs to the universal ribosomal protein uS3 family.</text>
</comment>
<sequence>MIERTFIAENVSETLIDEYFKGKLVRAGYSHLELKKTPIGTRITVFAEKPGFVIGRKGKMVKELTDTLTEVYKVENPQIEVKPLETPDLDPAIVGHKIAASLEKGMHFRKTAHSAVRRVMAAGAKGVAIIISGKLSGERSRTEKFMDGYMKHCGEPAEELVIKSHQLAKLKLGIVGVTVKIMRPDVSLPDEIIILSGEIKEVTEFSEVSQE</sequence>
<gene>
    <name evidence="1" type="primary">rps3</name>
    <name type="ordered locus">Mevan_0715</name>
</gene>
<proteinExistence type="inferred from homology"/>